<proteinExistence type="inferred from homology"/>
<keyword id="KW-0963">Cytoplasm</keyword>
<keyword id="KW-0312">Gluconeogenesis</keyword>
<keyword id="KW-0324">Glycolysis</keyword>
<keyword id="KW-0413">Isomerase</keyword>
<evidence type="ECO:0000250" key="1"/>
<evidence type="ECO:0000255" key="2">
    <source>
        <dbReference type="HAMAP-Rule" id="MF_00147"/>
    </source>
</evidence>
<dbReference type="EC" id="5.3.1.1" evidence="2"/>
<dbReference type="EMBL" id="BA000034">
    <property type="protein sequence ID" value="BAC64517.1"/>
    <property type="molecule type" value="Genomic_DNA"/>
</dbReference>
<dbReference type="RefSeq" id="WP_002990539.1">
    <property type="nucleotide sequence ID" value="NC_004606.1"/>
</dbReference>
<dbReference type="SMR" id="P0DG11"/>
<dbReference type="GeneID" id="69901181"/>
<dbReference type="KEGG" id="sps:SPs1422"/>
<dbReference type="HOGENOM" id="CLU_024251_2_3_9"/>
<dbReference type="UniPathway" id="UPA00109">
    <property type="reaction ID" value="UER00189"/>
</dbReference>
<dbReference type="UniPathway" id="UPA00138"/>
<dbReference type="GO" id="GO:0005829">
    <property type="term" value="C:cytosol"/>
    <property type="evidence" value="ECO:0007669"/>
    <property type="project" value="TreeGrafter"/>
</dbReference>
<dbReference type="GO" id="GO:0004807">
    <property type="term" value="F:triose-phosphate isomerase activity"/>
    <property type="evidence" value="ECO:0007669"/>
    <property type="project" value="UniProtKB-UniRule"/>
</dbReference>
<dbReference type="GO" id="GO:0006094">
    <property type="term" value="P:gluconeogenesis"/>
    <property type="evidence" value="ECO:0007669"/>
    <property type="project" value="UniProtKB-UniRule"/>
</dbReference>
<dbReference type="GO" id="GO:0046166">
    <property type="term" value="P:glyceraldehyde-3-phosphate biosynthetic process"/>
    <property type="evidence" value="ECO:0007669"/>
    <property type="project" value="TreeGrafter"/>
</dbReference>
<dbReference type="GO" id="GO:0019563">
    <property type="term" value="P:glycerol catabolic process"/>
    <property type="evidence" value="ECO:0007669"/>
    <property type="project" value="TreeGrafter"/>
</dbReference>
<dbReference type="GO" id="GO:0006096">
    <property type="term" value="P:glycolytic process"/>
    <property type="evidence" value="ECO:0007669"/>
    <property type="project" value="UniProtKB-UniRule"/>
</dbReference>
<dbReference type="CDD" id="cd00311">
    <property type="entry name" value="TIM"/>
    <property type="match status" value="1"/>
</dbReference>
<dbReference type="FunFam" id="3.20.20.70:FF:000016">
    <property type="entry name" value="Triosephosphate isomerase"/>
    <property type="match status" value="1"/>
</dbReference>
<dbReference type="Gene3D" id="3.20.20.70">
    <property type="entry name" value="Aldolase class I"/>
    <property type="match status" value="1"/>
</dbReference>
<dbReference type="HAMAP" id="MF_00147_B">
    <property type="entry name" value="TIM_B"/>
    <property type="match status" value="1"/>
</dbReference>
<dbReference type="InterPro" id="IPR013785">
    <property type="entry name" value="Aldolase_TIM"/>
</dbReference>
<dbReference type="InterPro" id="IPR035990">
    <property type="entry name" value="TIM_sf"/>
</dbReference>
<dbReference type="InterPro" id="IPR022896">
    <property type="entry name" value="TrioseP_Isoase_bac/euk"/>
</dbReference>
<dbReference type="InterPro" id="IPR000652">
    <property type="entry name" value="Triosephosphate_isomerase"/>
</dbReference>
<dbReference type="InterPro" id="IPR020861">
    <property type="entry name" value="Triosephosphate_isomerase_AS"/>
</dbReference>
<dbReference type="NCBIfam" id="TIGR00419">
    <property type="entry name" value="tim"/>
    <property type="match status" value="1"/>
</dbReference>
<dbReference type="PANTHER" id="PTHR21139">
    <property type="entry name" value="TRIOSEPHOSPHATE ISOMERASE"/>
    <property type="match status" value="1"/>
</dbReference>
<dbReference type="PANTHER" id="PTHR21139:SF42">
    <property type="entry name" value="TRIOSEPHOSPHATE ISOMERASE"/>
    <property type="match status" value="1"/>
</dbReference>
<dbReference type="Pfam" id="PF00121">
    <property type="entry name" value="TIM"/>
    <property type="match status" value="1"/>
</dbReference>
<dbReference type="SUPFAM" id="SSF51351">
    <property type="entry name" value="Triosephosphate isomerase (TIM)"/>
    <property type="match status" value="1"/>
</dbReference>
<dbReference type="PROSITE" id="PS00171">
    <property type="entry name" value="TIM_1"/>
    <property type="match status" value="1"/>
</dbReference>
<dbReference type="PROSITE" id="PS51440">
    <property type="entry name" value="TIM_2"/>
    <property type="match status" value="1"/>
</dbReference>
<protein>
    <recommendedName>
        <fullName evidence="2">Triosephosphate isomerase</fullName>
        <shortName evidence="2">TIM</shortName>
        <shortName evidence="2">TPI</shortName>
        <ecNumber evidence="2">5.3.1.1</ecNumber>
    </recommendedName>
    <alternativeName>
        <fullName evidence="2">Triose-phosphate isomerase</fullName>
    </alternativeName>
</protein>
<comment type="function">
    <text evidence="2">Involved in the gluconeogenesis. Catalyzes stereospecifically the conversion of dihydroxyacetone phosphate (DHAP) to D-glyceraldehyde-3-phosphate (G3P).</text>
</comment>
<comment type="catalytic activity">
    <reaction evidence="2">
        <text>D-glyceraldehyde 3-phosphate = dihydroxyacetone phosphate</text>
        <dbReference type="Rhea" id="RHEA:18585"/>
        <dbReference type="ChEBI" id="CHEBI:57642"/>
        <dbReference type="ChEBI" id="CHEBI:59776"/>
        <dbReference type="EC" id="5.3.1.1"/>
    </reaction>
</comment>
<comment type="pathway">
    <text evidence="2">Carbohydrate biosynthesis; gluconeogenesis.</text>
</comment>
<comment type="pathway">
    <text evidence="2">Carbohydrate degradation; glycolysis; D-glyceraldehyde 3-phosphate from glycerone phosphate: step 1/1.</text>
</comment>
<comment type="subunit">
    <text evidence="2">Homodimer.</text>
</comment>
<comment type="subcellular location">
    <subcellularLocation>
        <location evidence="2">Cytoplasm</location>
    </subcellularLocation>
</comment>
<comment type="similarity">
    <text evidence="2">Belongs to the triosephosphate isomerase family.</text>
</comment>
<gene>
    <name evidence="2" type="primary">tpiA</name>
    <name type="synonym">tpi</name>
    <name type="ordered locus">SPs1422</name>
</gene>
<reference key="1">
    <citation type="journal article" date="2003" name="Genome Res.">
        <title>Genome sequence of an M3 strain of Streptococcus pyogenes reveals a large-scale genomic rearrangement in invasive strains and new insights into phage evolution.</title>
        <authorList>
            <person name="Nakagawa I."/>
            <person name="Kurokawa K."/>
            <person name="Yamashita A."/>
            <person name="Nakata M."/>
            <person name="Tomiyasu Y."/>
            <person name="Okahashi N."/>
            <person name="Kawabata S."/>
            <person name="Yamazaki K."/>
            <person name="Shiba T."/>
            <person name="Yasunaga T."/>
            <person name="Hayashi H."/>
            <person name="Hattori M."/>
            <person name="Hamada S."/>
        </authorList>
    </citation>
    <scope>NUCLEOTIDE SEQUENCE [LARGE SCALE GENOMIC DNA]</scope>
    <source>
        <strain>SSI-1</strain>
    </source>
</reference>
<name>TPIS_STRPQ</name>
<sequence>MSRKPIIAGNWKMNKNPQEAKAFVEAVASKLPSTDLVDVAVAAPAVDLVTTIEAAKDSVLKVAAQNCYFENTGAFTGETSPKVLAEMGADYVVIGHSERRDYFHETDEDINKKAKAIFANGLTPIVCCGESLETYEAGKAVEFVGAQVSAALAGLSAEQVASLVLAYEPIWAIGTGKSATQDDAQNMCKAVRDVVAADFGQEVADKVRVQYGGSVKPENVKDYMACPDVDGALVGGASLEADSFLALLDFLN</sequence>
<accession>P0DG11</accession>
<accession>P69888</accession>
<accession>P82478</accession>
<organism>
    <name type="scientific">Streptococcus pyogenes serotype M3 (strain SSI-1)</name>
    <dbReference type="NCBI Taxonomy" id="193567"/>
    <lineage>
        <taxon>Bacteria</taxon>
        <taxon>Bacillati</taxon>
        <taxon>Bacillota</taxon>
        <taxon>Bacilli</taxon>
        <taxon>Lactobacillales</taxon>
        <taxon>Streptococcaceae</taxon>
        <taxon>Streptococcus</taxon>
    </lineage>
</organism>
<feature type="initiator methionine" description="Removed" evidence="1">
    <location>
        <position position="1"/>
    </location>
</feature>
<feature type="chain" id="PRO_0000411595" description="Triosephosphate isomerase">
    <location>
        <begin position="2"/>
        <end position="252"/>
    </location>
</feature>
<feature type="active site" description="Electrophile" evidence="2">
    <location>
        <position position="96"/>
    </location>
</feature>
<feature type="active site" description="Proton acceptor" evidence="2">
    <location>
        <position position="168"/>
    </location>
</feature>
<feature type="binding site" evidence="2">
    <location>
        <begin position="10"/>
        <end position="12"/>
    </location>
    <ligand>
        <name>substrate</name>
    </ligand>
</feature>
<feature type="binding site" evidence="2">
    <location>
        <position position="174"/>
    </location>
    <ligand>
        <name>substrate</name>
    </ligand>
</feature>
<feature type="binding site" evidence="2">
    <location>
        <position position="214"/>
    </location>
    <ligand>
        <name>substrate</name>
    </ligand>
</feature>
<feature type="binding site" evidence="2">
    <location>
        <begin position="235"/>
        <end position="236"/>
    </location>
    <ligand>
        <name>substrate</name>
    </ligand>
</feature>